<evidence type="ECO:0000255" key="1">
    <source>
        <dbReference type="HAMAP-Rule" id="MF_00735"/>
    </source>
</evidence>
<protein>
    <recommendedName>
        <fullName evidence="1">Ribosomal protein L11 methyltransferase</fullName>
        <shortName evidence="1">L11 Mtase</shortName>
        <ecNumber evidence="1">2.1.1.-</ecNumber>
    </recommendedName>
</protein>
<gene>
    <name evidence="1" type="primary">prmA</name>
    <name type="ordered locus">Ldb0884</name>
</gene>
<keyword id="KW-0963">Cytoplasm</keyword>
<keyword id="KW-0489">Methyltransferase</keyword>
<keyword id="KW-1185">Reference proteome</keyword>
<keyword id="KW-0949">S-adenosyl-L-methionine</keyword>
<keyword id="KW-0808">Transferase</keyword>
<organism>
    <name type="scientific">Lactobacillus delbrueckii subsp. bulgaricus (strain ATCC 11842 / DSM 20081 / BCRC 10696 / JCM 1002 / NBRC 13953 / NCIMB 11778 / NCTC 12712 / WDCM 00102 / Lb 14)</name>
    <dbReference type="NCBI Taxonomy" id="390333"/>
    <lineage>
        <taxon>Bacteria</taxon>
        <taxon>Bacillati</taxon>
        <taxon>Bacillota</taxon>
        <taxon>Bacilli</taxon>
        <taxon>Lactobacillales</taxon>
        <taxon>Lactobacillaceae</taxon>
        <taxon>Lactobacillus</taxon>
    </lineage>
</organism>
<feature type="chain" id="PRO_1000062123" description="Ribosomal protein L11 methyltransferase">
    <location>
        <begin position="1"/>
        <end position="314"/>
    </location>
</feature>
<feature type="binding site" evidence="1">
    <location>
        <position position="163"/>
    </location>
    <ligand>
        <name>S-adenosyl-L-methionine</name>
        <dbReference type="ChEBI" id="CHEBI:59789"/>
    </ligand>
</feature>
<feature type="binding site" evidence="1">
    <location>
        <position position="184"/>
    </location>
    <ligand>
        <name>S-adenosyl-L-methionine</name>
        <dbReference type="ChEBI" id="CHEBI:59789"/>
    </ligand>
</feature>
<feature type="binding site" evidence="1">
    <location>
        <position position="206"/>
    </location>
    <ligand>
        <name>S-adenosyl-L-methionine</name>
        <dbReference type="ChEBI" id="CHEBI:59789"/>
    </ligand>
</feature>
<feature type="binding site" evidence="1">
    <location>
        <position position="248"/>
    </location>
    <ligand>
        <name>S-adenosyl-L-methionine</name>
        <dbReference type="ChEBI" id="CHEBI:59789"/>
    </ligand>
</feature>
<sequence>MKLLEIKIESSYDVEDALAYFATEDLKALGTEARRRSDFEQAGWLHDSTVVDMDDIPNLPDELEFIAYFDEETDPEEMVKCFKDKLAELAGYGLKTAPGEISVDYVADQDWNTVWKKYYHVINLSRHLAIVPEWEDYQPAFKDQEIIRLDPGLAFGTGNHQTTQLAMLGIERAMVKPLTVADVGTGSGILAIAAHKLGAKSVLATDISDESMTAAEENAALNGIHDIALQKTSLLADVDGKFDLIVANILAEILLDLIPQLDSHLNEDGQVIFSGIDYLQLPKIEQALAENSFQIDLKMRAGRWIGLAISRKHD</sequence>
<name>PRMA_LACDA</name>
<comment type="function">
    <text evidence="1">Methylates ribosomal protein L11.</text>
</comment>
<comment type="catalytic activity">
    <reaction evidence="1">
        <text>L-lysyl-[protein] + 3 S-adenosyl-L-methionine = N(6),N(6),N(6)-trimethyl-L-lysyl-[protein] + 3 S-adenosyl-L-homocysteine + 3 H(+)</text>
        <dbReference type="Rhea" id="RHEA:54192"/>
        <dbReference type="Rhea" id="RHEA-COMP:9752"/>
        <dbReference type="Rhea" id="RHEA-COMP:13826"/>
        <dbReference type="ChEBI" id="CHEBI:15378"/>
        <dbReference type="ChEBI" id="CHEBI:29969"/>
        <dbReference type="ChEBI" id="CHEBI:57856"/>
        <dbReference type="ChEBI" id="CHEBI:59789"/>
        <dbReference type="ChEBI" id="CHEBI:61961"/>
    </reaction>
</comment>
<comment type="subcellular location">
    <subcellularLocation>
        <location evidence="1">Cytoplasm</location>
    </subcellularLocation>
</comment>
<comment type="similarity">
    <text evidence="1">Belongs to the methyltransferase superfamily. PrmA family.</text>
</comment>
<reference key="1">
    <citation type="journal article" date="2006" name="Proc. Natl. Acad. Sci. U.S.A.">
        <title>The complete genome sequence of Lactobacillus bulgaricus reveals extensive and ongoing reductive evolution.</title>
        <authorList>
            <person name="van de Guchte M."/>
            <person name="Penaud S."/>
            <person name="Grimaldi C."/>
            <person name="Barbe V."/>
            <person name="Bryson K."/>
            <person name="Nicolas P."/>
            <person name="Robert C."/>
            <person name="Oztas S."/>
            <person name="Mangenot S."/>
            <person name="Couloux A."/>
            <person name="Loux V."/>
            <person name="Dervyn R."/>
            <person name="Bossy R."/>
            <person name="Bolotin A."/>
            <person name="Batto J.-M."/>
            <person name="Walunas T."/>
            <person name="Gibrat J.-F."/>
            <person name="Bessieres P."/>
            <person name="Weissenbach J."/>
            <person name="Ehrlich S.D."/>
            <person name="Maguin E."/>
        </authorList>
    </citation>
    <scope>NUCLEOTIDE SEQUENCE [LARGE SCALE GENOMIC DNA]</scope>
    <source>
        <strain>ATCC 11842 / DSM 20081 / BCRC 10696 / JCM 1002 / NBRC 13953 / NCIMB 11778 / NCTC 12712 / WDCM 00102 / Lb 14</strain>
    </source>
</reference>
<proteinExistence type="inferred from homology"/>
<dbReference type="EC" id="2.1.1.-" evidence="1"/>
<dbReference type="EMBL" id="CR954253">
    <property type="protein sequence ID" value="CAI97705.1"/>
    <property type="molecule type" value="Genomic_DNA"/>
</dbReference>
<dbReference type="RefSeq" id="WP_011543833.1">
    <property type="nucleotide sequence ID" value="NC_008054.1"/>
</dbReference>
<dbReference type="SMR" id="Q1GAH2"/>
<dbReference type="STRING" id="390333.Ldb0884"/>
<dbReference type="KEGG" id="ldb:Ldb0884"/>
<dbReference type="PATRIC" id="fig|390333.13.peg.1859"/>
<dbReference type="eggNOG" id="COG2264">
    <property type="taxonomic scope" value="Bacteria"/>
</dbReference>
<dbReference type="HOGENOM" id="CLU_049382_0_1_9"/>
<dbReference type="BioCyc" id="LDEL390333:LDB_RS03885-MONOMER"/>
<dbReference type="Proteomes" id="UP000001259">
    <property type="component" value="Chromosome"/>
</dbReference>
<dbReference type="GO" id="GO:0005737">
    <property type="term" value="C:cytoplasm"/>
    <property type="evidence" value="ECO:0007669"/>
    <property type="project" value="UniProtKB-SubCell"/>
</dbReference>
<dbReference type="GO" id="GO:0016279">
    <property type="term" value="F:protein-lysine N-methyltransferase activity"/>
    <property type="evidence" value="ECO:0007669"/>
    <property type="project" value="RHEA"/>
</dbReference>
<dbReference type="GO" id="GO:0032259">
    <property type="term" value="P:methylation"/>
    <property type="evidence" value="ECO:0007669"/>
    <property type="project" value="UniProtKB-KW"/>
</dbReference>
<dbReference type="CDD" id="cd02440">
    <property type="entry name" value="AdoMet_MTases"/>
    <property type="match status" value="1"/>
</dbReference>
<dbReference type="Gene3D" id="3.40.50.150">
    <property type="entry name" value="Vaccinia Virus protein VP39"/>
    <property type="match status" value="1"/>
</dbReference>
<dbReference type="HAMAP" id="MF_00735">
    <property type="entry name" value="Methyltr_PrmA"/>
    <property type="match status" value="1"/>
</dbReference>
<dbReference type="InterPro" id="IPR050078">
    <property type="entry name" value="Ribosomal_L11_MeTrfase_PrmA"/>
</dbReference>
<dbReference type="InterPro" id="IPR004498">
    <property type="entry name" value="Ribosomal_PrmA_MeTrfase"/>
</dbReference>
<dbReference type="InterPro" id="IPR029063">
    <property type="entry name" value="SAM-dependent_MTases_sf"/>
</dbReference>
<dbReference type="NCBIfam" id="TIGR00406">
    <property type="entry name" value="prmA"/>
    <property type="match status" value="1"/>
</dbReference>
<dbReference type="PANTHER" id="PTHR43648">
    <property type="entry name" value="ELECTRON TRANSFER FLAVOPROTEIN BETA SUBUNIT LYSINE METHYLTRANSFERASE"/>
    <property type="match status" value="1"/>
</dbReference>
<dbReference type="PANTHER" id="PTHR43648:SF1">
    <property type="entry name" value="ELECTRON TRANSFER FLAVOPROTEIN BETA SUBUNIT LYSINE METHYLTRANSFERASE"/>
    <property type="match status" value="1"/>
</dbReference>
<dbReference type="Pfam" id="PF06325">
    <property type="entry name" value="PrmA"/>
    <property type="match status" value="1"/>
</dbReference>
<dbReference type="PIRSF" id="PIRSF000401">
    <property type="entry name" value="RPL11_MTase"/>
    <property type="match status" value="1"/>
</dbReference>
<dbReference type="SUPFAM" id="SSF53335">
    <property type="entry name" value="S-adenosyl-L-methionine-dependent methyltransferases"/>
    <property type="match status" value="1"/>
</dbReference>
<accession>Q1GAH2</accession>